<dbReference type="EMBL" id="D78508">
    <property type="protein sequence ID" value="BAA11405.1"/>
    <property type="molecule type" value="Genomic_DNA"/>
</dbReference>
<dbReference type="EMBL" id="AL009126">
    <property type="protein sequence ID" value="CAB12663.1"/>
    <property type="molecule type" value="Genomic_DNA"/>
</dbReference>
<dbReference type="PIR" id="B69804">
    <property type="entry name" value="B69804"/>
</dbReference>
<dbReference type="RefSeq" id="NP_388715.1">
    <property type="nucleotide sequence ID" value="NC_000964.3"/>
</dbReference>
<dbReference type="RefSeq" id="WP_003233588.1">
    <property type="nucleotide sequence ID" value="NZ_OZ025638.1"/>
</dbReference>
<dbReference type="PDB" id="7CBV">
    <property type="method" value="X-ray"/>
    <property type="resolution" value="2.30 A"/>
    <property type="chains" value="A/B=1-182"/>
</dbReference>
<dbReference type="PDBsum" id="7CBV"/>
<dbReference type="SMR" id="P94443"/>
<dbReference type="FunCoup" id="P94443">
    <property type="interactions" value="11"/>
</dbReference>
<dbReference type="STRING" id="224308.BSU08340"/>
<dbReference type="PaxDb" id="224308-BSU08340"/>
<dbReference type="EnsemblBacteria" id="CAB12663">
    <property type="protein sequence ID" value="CAB12663"/>
    <property type="gene ID" value="BSU_08340"/>
</dbReference>
<dbReference type="GeneID" id="936174"/>
<dbReference type="KEGG" id="bsu:BSU08340"/>
<dbReference type="PATRIC" id="fig|224308.179.peg.901"/>
<dbReference type="eggNOG" id="COG1695">
    <property type="taxonomic scope" value="Bacteria"/>
</dbReference>
<dbReference type="InParanoid" id="P94443"/>
<dbReference type="OrthoDB" id="9783723at2"/>
<dbReference type="PhylomeDB" id="P94443"/>
<dbReference type="BioCyc" id="BSUB:BSU08340-MONOMER"/>
<dbReference type="Proteomes" id="UP000001570">
    <property type="component" value="Chromosome"/>
</dbReference>
<dbReference type="GO" id="GO:0005737">
    <property type="term" value="C:cytoplasm"/>
    <property type="evidence" value="ECO:0007669"/>
    <property type="project" value="UniProtKB-SubCell"/>
</dbReference>
<dbReference type="GO" id="GO:0003677">
    <property type="term" value="F:DNA binding"/>
    <property type="evidence" value="ECO:0007669"/>
    <property type="project" value="UniProtKB-KW"/>
</dbReference>
<dbReference type="Gene3D" id="6.10.140.190">
    <property type="match status" value="1"/>
</dbReference>
<dbReference type="Gene3D" id="1.10.10.10">
    <property type="entry name" value="Winged helix-like DNA-binding domain superfamily/Winged helix DNA-binding domain"/>
    <property type="match status" value="1"/>
</dbReference>
<dbReference type="InterPro" id="IPR018309">
    <property type="entry name" value="Tscrpt_reg_PadR_C"/>
</dbReference>
<dbReference type="InterPro" id="IPR005149">
    <property type="entry name" value="Tscrpt_reg_PadR_N"/>
</dbReference>
<dbReference type="InterPro" id="IPR036388">
    <property type="entry name" value="WH-like_DNA-bd_sf"/>
</dbReference>
<dbReference type="InterPro" id="IPR036390">
    <property type="entry name" value="WH_DNA-bd_sf"/>
</dbReference>
<dbReference type="PANTHER" id="PTHR43252:SF6">
    <property type="entry name" value="NEGATIVE TRANSCRIPTION REGULATOR PADR"/>
    <property type="match status" value="1"/>
</dbReference>
<dbReference type="PANTHER" id="PTHR43252">
    <property type="entry name" value="TRANSCRIPTIONAL REGULATOR YQJI"/>
    <property type="match status" value="1"/>
</dbReference>
<dbReference type="Pfam" id="PF03551">
    <property type="entry name" value="PadR"/>
    <property type="match status" value="1"/>
</dbReference>
<dbReference type="Pfam" id="PF10400">
    <property type="entry name" value="Vir_act_alpha_C"/>
    <property type="match status" value="1"/>
</dbReference>
<dbReference type="SUPFAM" id="SSF46785">
    <property type="entry name" value="Winged helix' DNA-binding domain"/>
    <property type="match status" value="1"/>
</dbReference>
<keyword id="KW-0002">3D-structure</keyword>
<keyword id="KW-0963">Cytoplasm</keyword>
<keyword id="KW-0238">DNA-binding</keyword>
<keyword id="KW-1185">Reference proteome</keyword>
<keyword id="KW-0678">Repressor</keyword>
<keyword id="KW-0804">Transcription</keyword>
<keyword id="KW-0805">Transcription regulation</keyword>
<protein>
    <recommendedName>
        <fullName evidence="6">Negative transcriptional regulator PadR</fullName>
    </recommendedName>
</protein>
<evidence type="ECO:0000269" key="1">
    <source>
    </source>
</evidence>
<evidence type="ECO:0000269" key="2">
    <source>
    </source>
</evidence>
<evidence type="ECO:0000269" key="3">
    <source>
    </source>
</evidence>
<evidence type="ECO:0000269" key="4">
    <source>
    </source>
</evidence>
<evidence type="ECO:0000303" key="5">
    <source>
    </source>
</evidence>
<evidence type="ECO:0000303" key="6">
    <source>
    </source>
</evidence>
<evidence type="ECO:0000305" key="7"/>
<evidence type="ECO:0000305" key="8">
    <source>
    </source>
</evidence>
<evidence type="ECO:0007744" key="9">
    <source>
        <dbReference type="PDB" id="7CBV"/>
    </source>
</evidence>
<evidence type="ECO:0007829" key="10">
    <source>
        <dbReference type="PDB" id="7CBV"/>
    </source>
</evidence>
<sequence>MRVLKYAILGLLRKGELSGYDITSYFKEELGQFWSAKHSQIYPELKKLTDEGFITFRTTIQGTKLEKKMYTLTDSGKQELHDWLIRHQPIPETVKDEFMLKAYFISCLSRQEASDLFKDQLQKRQAKLSDLQGSYEKLMASAEPMSFSSPDFGHYLVLTKALEREKNYVSWLESILAMIDKD</sequence>
<accession>P94443</accession>
<accession>Q796Z4</accession>
<organism>
    <name type="scientific">Bacillus subtilis (strain 168)</name>
    <dbReference type="NCBI Taxonomy" id="224308"/>
    <lineage>
        <taxon>Bacteria</taxon>
        <taxon>Bacillati</taxon>
        <taxon>Bacillota</taxon>
        <taxon>Bacilli</taxon>
        <taxon>Bacillales</taxon>
        <taxon>Bacillaceae</taxon>
        <taxon>Bacillus</taxon>
    </lineage>
</organism>
<proteinExistence type="evidence at protein level"/>
<comment type="function">
    <text evidence="1 2 3">Transcriptional regulator involved in the regulation of the metabolism of phenolic acids (PubMed:11073918, PubMed:18326577, PubMed:21685295). In the absence of phenolic acids, represses the expression of padC, which encodes a phenolic acid decarboxylase (PAD) involved in the detoxification of harmful phenolic acids (PubMed:18326577, PubMed:21685295). Acts by binding to the padC promoter region, preventing the transcription of the gene (PubMed:18326577, PubMed:21685295).</text>
</comment>
<comment type="activity regulation">
    <text evidence="2 3">PadR repressor activity is inhibited in the presence of phenolic acids, which directly modulate PadR binding to the promoter of padC, leading to the dissociation of PadR from the operator DNA and expression of padC (PubMed:18326577, PubMed:21685295). In the presence of MgCl(2), binding is not altered by phenolic acids (PubMed:21685295).</text>
</comment>
<comment type="subunit">
    <text evidence="3 4">Homodimer.</text>
</comment>
<comment type="subcellular location">
    <subcellularLocation>
        <location evidence="7">Cytoplasm</location>
    </subcellularLocation>
</comment>
<comment type="induction">
    <text evidence="2">Expression is low and appears constitutive.</text>
</comment>
<comment type="domain">
    <text evidence="4">Contains an N-terminal domain (NTD), which harbors a winged helix-turn-helix (wHTH) motif that is used for DNA binding, and a C-terminal dimerization domain (CTD).</text>
</comment>
<comment type="disruption phenotype">
    <text evidence="2">Deletion of the gene results in constitutive expression of padC and constitutive phenolic acid decarboxylase activity.</text>
</comment>
<comment type="similarity">
    <text evidence="7">Belongs to the PadR family.</text>
</comment>
<gene>
    <name evidence="5 6" type="primary">padR</name>
    <name type="synonym">yfiO</name>
    <name type="ordered locus">BSU08340</name>
</gene>
<reference key="1">
    <citation type="journal article" date="1996" name="Gene">
        <title>The Bacillus subtilis chromosome region near 78 degrees contains the genes encoding a new two-component system, three ABC transporters and a lipase.</title>
        <authorList>
            <person name="Yamamoto H."/>
            <person name="Uchiyama S."/>
            <person name="Sekiguchi J."/>
        </authorList>
    </citation>
    <scope>NUCLEOTIDE SEQUENCE [GENOMIC DNA]</scope>
    <source>
        <strain>168 / AC327</strain>
    </source>
</reference>
<reference key="2">
    <citation type="journal article" date="1997" name="Nature">
        <title>The complete genome sequence of the Gram-positive bacterium Bacillus subtilis.</title>
        <authorList>
            <person name="Kunst F."/>
            <person name="Ogasawara N."/>
            <person name="Moszer I."/>
            <person name="Albertini A.M."/>
            <person name="Alloni G."/>
            <person name="Azevedo V."/>
            <person name="Bertero M.G."/>
            <person name="Bessieres P."/>
            <person name="Bolotin A."/>
            <person name="Borchert S."/>
            <person name="Borriss R."/>
            <person name="Boursier L."/>
            <person name="Brans A."/>
            <person name="Braun M."/>
            <person name="Brignell S.C."/>
            <person name="Bron S."/>
            <person name="Brouillet S."/>
            <person name="Bruschi C.V."/>
            <person name="Caldwell B."/>
            <person name="Capuano V."/>
            <person name="Carter N.M."/>
            <person name="Choi S.-K."/>
            <person name="Codani J.-J."/>
            <person name="Connerton I.F."/>
            <person name="Cummings N.J."/>
            <person name="Daniel R.A."/>
            <person name="Denizot F."/>
            <person name="Devine K.M."/>
            <person name="Duesterhoeft A."/>
            <person name="Ehrlich S.D."/>
            <person name="Emmerson P.T."/>
            <person name="Entian K.-D."/>
            <person name="Errington J."/>
            <person name="Fabret C."/>
            <person name="Ferrari E."/>
            <person name="Foulger D."/>
            <person name="Fritz C."/>
            <person name="Fujita M."/>
            <person name="Fujita Y."/>
            <person name="Fuma S."/>
            <person name="Galizzi A."/>
            <person name="Galleron N."/>
            <person name="Ghim S.-Y."/>
            <person name="Glaser P."/>
            <person name="Goffeau A."/>
            <person name="Golightly E.J."/>
            <person name="Grandi G."/>
            <person name="Guiseppi G."/>
            <person name="Guy B.J."/>
            <person name="Haga K."/>
            <person name="Haiech J."/>
            <person name="Harwood C.R."/>
            <person name="Henaut A."/>
            <person name="Hilbert H."/>
            <person name="Holsappel S."/>
            <person name="Hosono S."/>
            <person name="Hullo M.-F."/>
            <person name="Itaya M."/>
            <person name="Jones L.-M."/>
            <person name="Joris B."/>
            <person name="Karamata D."/>
            <person name="Kasahara Y."/>
            <person name="Klaerr-Blanchard M."/>
            <person name="Klein C."/>
            <person name="Kobayashi Y."/>
            <person name="Koetter P."/>
            <person name="Koningstein G."/>
            <person name="Krogh S."/>
            <person name="Kumano M."/>
            <person name="Kurita K."/>
            <person name="Lapidus A."/>
            <person name="Lardinois S."/>
            <person name="Lauber J."/>
            <person name="Lazarevic V."/>
            <person name="Lee S.-M."/>
            <person name="Levine A."/>
            <person name="Liu H."/>
            <person name="Masuda S."/>
            <person name="Mauel C."/>
            <person name="Medigue C."/>
            <person name="Medina N."/>
            <person name="Mellado R.P."/>
            <person name="Mizuno M."/>
            <person name="Moestl D."/>
            <person name="Nakai S."/>
            <person name="Noback M."/>
            <person name="Noone D."/>
            <person name="O'Reilly M."/>
            <person name="Ogawa K."/>
            <person name="Ogiwara A."/>
            <person name="Oudega B."/>
            <person name="Park S.-H."/>
            <person name="Parro V."/>
            <person name="Pohl T.M."/>
            <person name="Portetelle D."/>
            <person name="Porwollik S."/>
            <person name="Prescott A.M."/>
            <person name="Presecan E."/>
            <person name="Pujic P."/>
            <person name="Purnelle B."/>
            <person name="Rapoport G."/>
            <person name="Rey M."/>
            <person name="Reynolds S."/>
            <person name="Rieger M."/>
            <person name="Rivolta C."/>
            <person name="Rocha E."/>
            <person name="Roche B."/>
            <person name="Rose M."/>
            <person name="Sadaie Y."/>
            <person name="Sato T."/>
            <person name="Scanlan E."/>
            <person name="Schleich S."/>
            <person name="Schroeter R."/>
            <person name="Scoffone F."/>
            <person name="Sekiguchi J."/>
            <person name="Sekowska A."/>
            <person name="Seror S.J."/>
            <person name="Serror P."/>
            <person name="Shin B.-S."/>
            <person name="Soldo B."/>
            <person name="Sorokin A."/>
            <person name="Tacconi E."/>
            <person name="Takagi T."/>
            <person name="Takahashi H."/>
            <person name="Takemaru K."/>
            <person name="Takeuchi M."/>
            <person name="Tamakoshi A."/>
            <person name="Tanaka T."/>
            <person name="Terpstra P."/>
            <person name="Tognoni A."/>
            <person name="Tosato V."/>
            <person name="Uchiyama S."/>
            <person name="Vandenbol M."/>
            <person name="Vannier F."/>
            <person name="Vassarotti A."/>
            <person name="Viari A."/>
            <person name="Wambutt R."/>
            <person name="Wedler E."/>
            <person name="Wedler H."/>
            <person name="Weitzenegger T."/>
            <person name="Winters P."/>
            <person name="Wipat A."/>
            <person name="Yamamoto H."/>
            <person name="Yamane K."/>
            <person name="Yasumoto K."/>
            <person name="Yata K."/>
            <person name="Yoshida K."/>
            <person name="Yoshikawa H.-F."/>
            <person name="Zumstein E."/>
            <person name="Yoshikawa H."/>
            <person name="Danchin A."/>
        </authorList>
    </citation>
    <scope>NUCLEOTIDE SEQUENCE [LARGE SCALE GENOMIC DNA]</scope>
    <source>
        <strain>168</strain>
    </source>
</reference>
<reference key="3">
    <citation type="journal article" date="2000" name="J. Bacteriol.">
        <title>Inducible metabolism of phenolic acids in Pediococcus pentosaceus is encoded by an autoregulated operon which involves a new class of negative transcriptional regulator.</title>
        <authorList>
            <person name="Barthelmebs L."/>
            <person name="Lecomte B."/>
            <person name="Divies C."/>
            <person name="Cavin J.-F."/>
        </authorList>
    </citation>
    <scope>FUNCTION</scope>
</reference>
<reference key="4">
    <citation type="journal article" date="2008" name="J. Bacteriol.">
        <title>Phenolic acid-mediated regulation of the padC gene, encoding the phenolic acid decarboxylase of Bacillus subtilis.</title>
        <authorList>
            <person name="Tran N.P."/>
            <person name="Gury J."/>
            <person name="Dartois V."/>
            <person name="Nguyen T.K.C."/>
            <person name="Seraut H."/>
            <person name="Barthelmebs L."/>
            <person name="Gervais P."/>
            <person name="Cavin J.-F."/>
        </authorList>
    </citation>
    <scope>FUNCTION</scope>
    <scope>ACTIVITY REGULATION</scope>
    <scope>INDUCTION</scope>
    <scope>DISRUPTION PHENOTYPE</scope>
</reference>
<reference key="5">
    <citation type="journal article" date="2011" name="J. Bacteriol.">
        <title>Genetic and biochemical analysis of PadR-padC promoter interactions during the phenolic acid stress response in Bacillus subtilis 168.</title>
        <authorList>
            <person name="Nguyen T.K."/>
            <person name="Tran N.P."/>
            <person name="Cavin J.F."/>
        </authorList>
    </citation>
    <scope>FUNCTION</scope>
    <scope>DNA-BINDING</scope>
    <scope>ACTIVITY REGULATION</scope>
    <scope>SUBUNIT</scope>
    <scope>MUTAGENESIS OF THR-63; ILE-85; GLU-97; LEU-100; ALA-113; LEU-128; LEU-138; MET-145 AND SER-149</scope>
    <source>
        <strain>168</strain>
    </source>
</reference>
<reference evidence="9" key="6">
    <citation type="journal article" date="2020" name="Biochem. Biophys. Res. Commun.">
        <title>Apo structure of the transcriptional regulator PadR from Bacillus subtilis: Structural dynamics and conserved Y70 residue.</title>
        <authorList>
            <person name="Park S.C."/>
            <person name="Song W.S."/>
            <person name="Yoon S.I."/>
        </authorList>
    </citation>
    <scope>X-RAY CRYSTALLOGRAPHY (2.30 ANGSTROMS)</scope>
    <scope>SUBUNIT</scope>
    <scope>DOMAIN</scope>
    <scope>MUTAGENESIS OF TYR-70</scope>
</reference>
<feature type="chain" id="PRO_0000360549" description="Negative transcriptional regulator PadR">
    <location>
        <begin position="1"/>
        <end position="182"/>
    </location>
</feature>
<feature type="site" description="Important for activity. Contributes to protein stability and DNA binding" evidence="8">
    <location>
        <position position="70"/>
    </location>
</feature>
<feature type="mutagenesis site" description="Retains the repressor function, but shows a reduced capacity to bind to the padC promoter. PAD activity in induced cultures is increased 2-fold compared to wild-type strain." evidence="3">
    <original>T</original>
    <variation>A</variation>
    <location>
        <position position="63"/>
    </location>
</feature>
<feature type="mutagenesis site" description="3.7-fold reduction in the binding affinity." evidence="4">
    <original>Y</original>
    <variation>A</variation>
    <location>
        <position position="70"/>
    </location>
</feature>
<feature type="mutagenesis site" description="Lack of repressor function." evidence="3">
    <original>I</original>
    <variation>T</variation>
    <location>
        <position position="85"/>
    </location>
</feature>
<feature type="mutagenesis site" description="Lack of repressor function." evidence="3">
    <original>E</original>
    <variation>F</variation>
    <location>
        <position position="97"/>
    </location>
</feature>
<feature type="mutagenesis site" description="Retains the repressor function. PAD activity in induced cultures is increased 2-fold compared to wild-type strain." evidence="3">
    <original>L</original>
    <variation>P</variation>
    <location>
        <position position="100"/>
    </location>
</feature>
<feature type="mutagenesis site" description="Retains the repressor function but is not completely inactivated by ferulic acid." evidence="3">
    <original>A</original>
    <variation>T</variation>
    <location>
        <position position="113"/>
    </location>
</feature>
<feature type="mutagenesis site" description="Lack of repressor function. Strongly reduces the capacity to bind to the padC promoter." evidence="3">
    <original>L</original>
    <variation>P</variation>
    <location>
        <position position="128"/>
    </location>
</feature>
<feature type="mutagenesis site" description="Retains the repressor function but is not completely inactivated by ferulic acid. Displays a higher affinity for the padC promoter." evidence="3">
    <original>L</original>
    <variation>P</variation>
    <location>
        <position position="138"/>
    </location>
</feature>
<feature type="mutagenesis site" description="Retains the repressor function. PAD activity in induced cultures is increased 2-fold compared to wild-type strain." evidence="3">
    <original>M</original>
    <variation>P</variation>
    <location>
        <position position="145"/>
    </location>
</feature>
<feature type="mutagenesis site" description="Retains the repressor function but is not completely inactivated by ferulic acid." evidence="3">
    <original>S</original>
    <variation>T</variation>
    <location>
        <position position="149"/>
    </location>
</feature>
<feature type="helix" evidence="10">
    <location>
        <begin position="5"/>
        <end position="11"/>
    </location>
</feature>
<feature type="helix" evidence="10">
    <location>
        <begin position="12"/>
        <end position="14"/>
    </location>
</feature>
<feature type="helix" evidence="10">
    <location>
        <begin position="19"/>
        <end position="27"/>
    </location>
</feature>
<feature type="turn" evidence="10">
    <location>
        <begin position="28"/>
        <end position="33"/>
    </location>
</feature>
<feature type="helix" evidence="10">
    <location>
        <begin position="38"/>
        <end position="50"/>
    </location>
</feature>
<feature type="strand" evidence="10">
    <location>
        <begin position="53"/>
        <end position="57"/>
    </location>
</feature>
<feature type="strand" evidence="10">
    <location>
        <begin position="69"/>
        <end position="72"/>
    </location>
</feature>
<feature type="helix" evidence="10">
    <location>
        <begin position="74"/>
        <end position="85"/>
    </location>
</feature>
<feature type="helix" evidence="10">
    <location>
        <begin position="97"/>
        <end position="103"/>
    </location>
</feature>
<feature type="helix" evidence="10">
    <location>
        <begin position="105"/>
        <end position="107"/>
    </location>
</feature>
<feature type="helix" evidence="10">
    <location>
        <begin position="110"/>
        <end position="138"/>
    </location>
</feature>
<feature type="helix" evidence="10">
    <location>
        <begin position="152"/>
        <end position="179"/>
    </location>
</feature>
<name>PADR_BACSU</name>